<comment type="function">
    <text evidence="1">Produces ATP from ADP in the presence of a proton gradient across the membrane.</text>
</comment>
<comment type="subunit">
    <text evidence="1">F-type ATPases have 2 components, CF(1) - the catalytic core - and CF(0) - the membrane proton channel. CF(1) has five subunits: alpha(3), beta(3), gamma(1), delta(1), epsilon(1). CF(0) has three main subunits: a, b and c.</text>
</comment>
<comment type="subcellular location">
    <subcellularLocation>
        <location evidence="1">Cell inner membrane</location>
        <topology evidence="1">Peripheral membrane protein</topology>
    </subcellularLocation>
</comment>
<comment type="similarity">
    <text evidence="1">Belongs to the ATPase epsilon chain family.</text>
</comment>
<gene>
    <name evidence="1" type="primary">atpC</name>
    <name type="ordered locus">Bamb_0098</name>
</gene>
<name>ATPE_BURCM</name>
<sequence length="141" mass="14985">MATIKVDVVSAEEQIFSGEAKFVALPGETGELGILPGHTPLITRIRPGAVRIEVEGGNDEFVFVAGGILEVQPGAVTVLADTAIRGKDLDAAKAEEARKRAEETLQNAKSDLDLAKAQSELATAMAQLEAIQRLAKIRSRH</sequence>
<organism>
    <name type="scientific">Burkholderia ambifaria (strain ATCC BAA-244 / DSM 16087 / CCUG 44356 / LMG 19182 / AMMD)</name>
    <name type="common">Burkholderia cepacia (strain AMMD)</name>
    <dbReference type="NCBI Taxonomy" id="339670"/>
    <lineage>
        <taxon>Bacteria</taxon>
        <taxon>Pseudomonadati</taxon>
        <taxon>Pseudomonadota</taxon>
        <taxon>Betaproteobacteria</taxon>
        <taxon>Burkholderiales</taxon>
        <taxon>Burkholderiaceae</taxon>
        <taxon>Burkholderia</taxon>
        <taxon>Burkholderia cepacia complex</taxon>
    </lineage>
</organism>
<protein>
    <recommendedName>
        <fullName evidence="1">ATP synthase epsilon chain</fullName>
    </recommendedName>
    <alternativeName>
        <fullName evidence="1">ATP synthase F1 sector epsilon subunit</fullName>
    </alternativeName>
    <alternativeName>
        <fullName evidence="1">F-ATPase epsilon subunit</fullName>
    </alternativeName>
</protein>
<dbReference type="EMBL" id="CP000440">
    <property type="protein sequence ID" value="ABI85659.1"/>
    <property type="molecule type" value="Genomic_DNA"/>
</dbReference>
<dbReference type="RefSeq" id="WP_006477288.1">
    <property type="nucleotide sequence ID" value="NZ_CP009798.1"/>
</dbReference>
<dbReference type="SMR" id="Q0BJL4"/>
<dbReference type="KEGG" id="bam:Bamb_0098"/>
<dbReference type="PATRIC" id="fig|339670.21.peg.1535"/>
<dbReference type="eggNOG" id="COG0355">
    <property type="taxonomic scope" value="Bacteria"/>
</dbReference>
<dbReference type="Proteomes" id="UP000000662">
    <property type="component" value="Chromosome 1"/>
</dbReference>
<dbReference type="GO" id="GO:0005886">
    <property type="term" value="C:plasma membrane"/>
    <property type="evidence" value="ECO:0007669"/>
    <property type="project" value="UniProtKB-SubCell"/>
</dbReference>
<dbReference type="GO" id="GO:0045259">
    <property type="term" value="C:proton-transporting ATP synthase complex"/>
    <property type="evidence" value="ECO:0007669"/>
    <property type="project" value="UniProtKB-KW"/>
</dbReference>
<dbReference type="GO" id="GO:0005524">
    <property type="term" value="F:ATP binding"/>
    <property type="evidence" value="ECO:0007669"/>
    <property type="project" value="UniProtKB-UniRule"/>
</dbReference>
<dbReference type="GO" id="GO:0046933">
    <property type="term" value="F:proton-transporting ATP synthase activity, rotational mechanism"/>
    <property type="evidence" value="ECO:0007669"/>
    <property type="project" value="UniProtKB-UniRule"/>
</dbReference>
<dbReference type="CDD" id="cd12152">
    <property type="entry name" value="F1-ATPase_delta"/>
    <property type="match status" value="1"/>
</dbReference>
<dbReference type="FunFam" id="2.60.15.10:FF:000001">
    <property type="entry name" value="ATP synthase epsilon chain"/>
    <property type="match status" value="1"/>
</dbReference>
<dbReference type="Gene3D" id="1.20.5.440">
    <property type="entry name" value="ATP synthase delta/epsilon subunit, C-terminal domain"/>
    <property type="match status" value="1"/>
</dbReference>
<dbReference type="Gene3D" id="2.60.15.10">
    <property type="entry name" value="F0F1 ATP synthase delta/epsilon subunit, N-terminal"/>
    <property type="match status" value="1"/>
</dbReference>
<dbReference type="HAMAP" id="MF_00530">
    <property type="entry name" value="ATP_synth_epsil_bac"/>
    <property type="match status" value="1"/>
</dbReference>
<dbReference type="InterPro" id="IPR036794">
    <property type="entry name" value="ATP_F1_dsu/esu_C_sf"/>
</dbReference>
<dbReference type="InterPro" id="IPR001469">
    <property type="entry name" value="ATP_synth_F1_dsu/esu"/>
</dbReference>
<dbReference type="InterPro" id="IPR020546">
    <property type="entry name" value="ATP_synth_F1_dsu/esu_N"/>
</dbReference>
<dbReference type="InterPro" id="IPR020547">
    <property type="entry name" value="ATP_synth_F1_esu_C"/>
</dbReference>
<dbReference type="InterPro" id="IPR036771">
    <property type="entry name" value="ATPsynth_dsu/esu_N"/>
</dbReference>
<dbReference type="NCBIfam" id="TIGR01216">
    <property type="entry name" value="ATP_synt_epsi"/>
    <property type="match status" value="1"/>
</dbReference>
<dbReference type="NCBIfam" id="NF001847">
    <property type="entry name" value="PRK00571.1-4"/>
    <property type="match status" value="1"/>
</dbReference>
<dbReference type="PANTHER" id="PTHR13822">
    <property type="entry name" value="ATP SYNTHASE DELTA/EPSILON CHAIN"/>
    <property type="match status" value="1"/>
</dbReference>
<dbReference type="PANTHER" id="PTHR13822:SF10">
    <property type="entry name" value="ATP SYNTHASE EPSILON CHAIN, CHLOROPLASTIC"/>
    <property type="match status" value="1"/>
</dbReference>
<dbReference type="Pfam" id="PF00401">
    <property type="entry name" value="ATP-synt_DE"/>
    <property type="match status" value="1"/>
</dbReference>
<dbReference type="Pfam" id="PF02823">
    <property type="entry name" value="ATP-synt_DE_N"/>
    <property type="match status" value="1"/>
</dbReference>
<dbReference type="SUPFAM" id="SSF46604">
    <property type="entry name" value="Epsilon subunit of F1F0-ATP synthase C-terminal domain"/>
    <property type="match status" value="1"/>
</dbReference>
<dbReference type="SUPFAM" id="SSF51344">
    <property type="entry name" value="Epsilon subunit of F1F0-ATP synthase N-terminal domain"/>
    <property type="match status" value="1"/>
</dbReference>
<accession>Q0BJL4</accession>
<keyword id="KW-0066">ATP synthesis</keyword>
<keyword id="KW-0997">Cell inner membrane</keyword>
<keyword id="KW-1003">Cell membrane</keyword>
<keyword id="KW-0139">CF(1)</keyword>
<keyword id="KW-0375">Hydrogen ion transport</keyword>
<keyword id="KW-0406">Ion transport</keyword>
<keyword id="KW-0472">Membrane</keyword>
<keyword id="KW-0813">Transport</keyword>
<reference key="1">
    <citation type="submission" date="2006-08" db="EMBL/GenBank/DDBJ databases">
        <title>Complete sequence of chromosome 1 of Burkholderia cepacia AMMD.</title>
        <authorList>
            <person name="Copeland A."/>
            <person name="Lucas S."/>
            <person name="Lapidus A."/>
            <person name="Barry K."/>
            <person name="Detter J.C."/>
            <person name="Glavina del Rio T."/>
            <person name="Hammon N."/>
            <person name="Israni S."/>
            <person name="Pitluck S."/>
            <person name="Bruce D."/>
            <person name="Chain P."/>
            <person name="Malfatti S."/>
            <person name="Shin M."/>
            <person name="Vergez L."/>
            <person name="Schmutz J."/>
            <person name="Larimer F."/>
            <person name="Land M."/>
            <person name="Hauser L."/>
            <person name="Kyrpides N."/>
            <person name="Kim E."/>
            <person name="Parke J."/>
            <person name="Coenye T."/>
            <person name="Konstantinidis K."/>
            <person name="Ramette A."/>
            <person name="Tiedje J."/>
            <person name="Richardson P."/>
        </authorList>
    </citation>
    <scope>NUCLEOTIDE SEQUENCE [LARGE SCALE GENOMIC DNA]</scope>
    <source>
        <strain>ATCC BAA-244 / DSM 16087 / CCUG 44356 / LMG 19182 / AMMD</strain>
    </source>
</reference>
<feature type="chain" id="PRO_1000056459" description="ATP synthase epsilon chain">
    <location>
        <begin position="1"/>
        <end position="141"/>
    </location>
</feature>
<evidence type="ECO:0000255" key="1">
    <source>
        <dbReference type="HAMAP-Rule" id="MF_00530"/>
    </source>
</evidence>
<proteinExistence type="inferred from homology"/>